<evidence type="ECO:0000255" key="1">
    <source>
        <dbReference type="HAMAP-Rule" id="MF_00188"/>
    </source>
</evidence>
<feature type="chain" id="PRO_1000020872" description="Protease HtpX homolog">
    <location>
        <begin position="1"/>
        <end position="293"/>
    </location>
</feature>
<feature type="transmembrane region" description="Helical" evidence="1">
    <location>
        <begin position="4"/>
        <end position="24"/>
    </location>
</feature>
<feature type="transmembrane region" description="Helical" evidence="1">
    <location>
        <begin position="39"/>
        <end position="59"/>
    </location>
</feature>
<feature type="transmembrane region" description="Helical" evidence="1">
    <location>
        <begin position="159"/>
        <end position="179"/>
    </location>
</feature>
<feature type="transmembrane region" description="Helical" evidence="1">
    <location>
        <begin position="200"/>
        <end position="220"/>
    </location>
</feature>
<feature type="active site" evidence="1">
    <location>
        <position position="145"/>
    </location>
</feature>
<feature type="binding site" evidence="1">
    <location>
        <position position="144"/>
    </location>
    <ligand>
        <name>Zn(2+)</name>
        <dbReference type="ChEBI" id="CHEBI:29105"/>
        <note>catalytic</note>
    </ligand>
</feature>
<feature type="binding site" evidence="1">
    <location>
        <position position="148"/>
    </location>
    <ligand>
        <name>Zn(2+)</name>
        <dbReference type="ChEBI" id="CHEBI:29105"/>
        <note>catalytic</note>
    </ligand>
</feature>
<feature type="binding site" evidence="1">
    <location>
        <position position="225"/>
    </location>
    <ligand>
        <name>Zn(2+)</name>
        <dbReference type="ChEBI" id="CHEBI:29105"/>
        <note>catalytic</note>
    </ligand>
</feature>
<gene>
    <name evidence="1" type="primary">htpX</name>
    <name type="ordered locus">HEAR2180</name>
</gene>
<dbReference type="EC" id="3.4.24.-" evidence="1"/>
<dbReference type="EMBL" id="CU207211">
    <property type="protein sequence ID" value="CAL62316.1"/>
    <property type="molecule type" value="Genomic_DNA"/>
</dbReference>
<dbReference type="SMR" id="A4G729"/>
<dbReference type="STRING" id="204773.HEAR2180"/>
<dbReference type="KEGG" id="har:HEAR2180"/>
<dbReference type="eggNOG" id="COG0501">
    <property type="taxonomic scope" value="Bacteria"/>
</dbReference>
<dbReference type="HOGENOM" id="CLU_042266_1_0_4"/>
<dbReference type="OrthoDB" id="15218at2"/>
<dbReference type="Proteomes" id="UP000006697">
    <property type="component" value="Chromosome"/>
</dbReference>
<dbReference type="GO" id="GO:0005886">
    <property type="term" value="C:plasma membrane"/>
    <property type="evidence" value="ECO:0007669"/>
    <property type="project" value="UniProtKB-SubCell"/>
</dbReference>
<dbReference type="GO" id="GO:0004222">
    <property type="term" value="F:metalloendopeptidase activity"/>
    <property type="evidence" value="ECO:0007669"/>
    <property type="project" value="UniProtKB-UniRule"/>
</dbReference>
<dbReference type="GO" id="GO:0008270">
    <property type="term" value="F:zinc ion binding"/>
    <property type="evidence" value="ECO:0007669"/>
    <property type="project" value="UniProtKB-UniRule"/>
</dbReference>
<dbReference type="GO" id="GO:0006508">
    <property type="term" value="P:proteolysis"/>
    <property type="evidence" value="ECO:0007669"/>
    <property type="project" value="UniProtKB-KW"/>
</dbReference>
<dbReference type="CDD" id="cd07335">
    <property type="entry name" value="M48B_HtpX_like"/>
    <property type="match status" value="1"/>
</dbReference>
<dbReference type="Gene3D" id="3.30.2010.10">
    <property type="entry name" value="Metalloproteases ('zincins'), catalytic domain"/>
    <property type="match status" value="1"/>
</dbReference>
<dbReference type="HAMAP" id="MF_00188">
    <property type="entry name" value="Pept_M48_protease_HtpX"/>
    <property type="match status" value="1"/>
</dbReference>
<dbReference type="InterPro" id="IPR050083">
    <property type="entry name" value="HtpX_protease"/>
</dbReference>
<dbReference type="InterPro" id="IPR022919">
    <property type="entry name" value="Pept_M48_protease_HtpX"/>
</dbReference>
<dbReference type="InterPro" id="IPR001915">
    <property type="entry name" value="Peptidase_M48"/>
</dbReference>
<dbReference type="NCBIfam" id="NF003965">
    <property type="entry name" value="PRK05457.1"/>
    <property type="match status" value="1"/>
</dbReference>
<dbReference type="PANTHER" id="PTHR43221">
    <property type="entry name" value="PROTEASE HTPX"/>
    <property type="match status" value="1"/>
</dbReference>
<dbReference type="PANTHER" id="PTHR43221:SF1">
    <property type="entry name" value="PROTEASE HTPX"/>
    <property type="match status" value="1"/>
</dbReference>
<dbReference type="Pfam" id="PF01435">
    <property type="entry name" value="Peptidase_M48"/>
    <property type="match status" value="1"/>
</dbReference>
<organism>
    <name type="scientific">Herminiimonas arsenicoxydans</name>
    <dbReference type="NCBI Taxonomy" id="204773"/>
    <lineage>
        <taxon>Bacteria</taxon>
        <taxon>Pseudomonadati</taxon>
        <taxon>Pseudomonadota</taxon>
        <taxon>Betaproteobacteria</taxon>
        <taxon>Burkholderiales</taxon>
        <taxon>Oxalobacteraceae</taxon>
        <taxon>Herminiimonas</taxon>
    </lineage>
</organism>
<name>HTPX_HERAR</name>
<protein>
    <recommendedName>
        <fullName evidence="1">Protease HtpX homolog</fullName>
        <ecNumber evidence="1">3.4.24.-</ecNumber>
    </recommendedName>
</protein>
<accession>A4G729</accession>
<keyword id="KW-0997">Cell inner membrane</keyword>
<keyword id="KW-1003">Cell membrane</keyword>
<keyword id="KW-0378">Hydrolase</keyword>
<keyword id="KW-0472">Membrane</keyword>
<keyword id="KW-0479">Metal-binding</keyword>
<keyword id="KW-0482">Metalloprotease</keyword>
<keyword id="KW-0645">Protease</keyword>
<keyword id="KW-1185">Reference proteome</keyword>
<keyword id="KW-0812">Transmembrane</keyword>
<keyword id="KW-1133">Transmembrane helix</keyword>
<keyword id="KW-0862">Zinc</keyword>
<proteinExistence type="inferred from homology"/>
<sequence length="293" mass="31011">MKRIFLFVATNIAVIAVMSIVLSLLGVDRFISQAGLNLPMLLVFSLVVGFTGAIISLLISKPMAKWSTGARVITAPSSSTELWLIDSVRKLSERAGIAMPEVAVYDGEPNAFATGAFKNSALVAVSTGLLQSMTKEEVEAVLAHEVAHVANGDMVTMTLVQGVVNTFVVFLARVVGYFVDRALSSRDSNNNGGQGIGYTITVLVCQVVFGIAASVIVAWFSRHREFRADAGAATLLGSPQPMMKALARLGGIAPNSLPEGMASMGINDKPGFAALFSSHPPIEQRIAALRSMQ</sequence>
<reference key="1">
    <citation type="journal article" date="2007" name="PLoS Genet.">
        <title>A tale of two oxidation states: bacterial colonization of arsenic-rich environments.</title>
        <authorList>
            <person name="Muller D."/>
            <person name="Medigue C."/>
            <person name="Koechler S."/>
            <person name="Barbe V."/>
            <person name="Barakat M."/>
            <person name="Talla E."/>
            <person name="Bonnefoy V."/>
            <person name="Krin E."/>
            <person name="Arsene-Ploetze F."/>
            <person name="Carapito C."/>
            <person name="Chandler M."/>
            <person name="Cournoyer B."/>
            <person name="Cruveiller S."/>
            <person name="Dossat C."/>
            <person name="Duval S."/>
            <person name="Heymann M."/>
            <person name="Leize E."/>
            <person name="Lieutaud A."/>
            <person name="Lievremont D."/>
            <person name="Makita Y."/>
            <person name="Mangenot S."/>
            <person name="Nitschke W."/>
            <person name="Ortet P."/>
            <person name="Perdrial N."/>
            <person name="Schoepp B."/>
            <person name="Siguier P."/>
            <person name="Simeonova D.D."/>
            <person name="Rouy Z."/>
            <person name="Segurens B."/>
            <person name="Turlin E."/>
            <person name="Vallenet D."/>
            <person name="van Dorsselaer A."/>
            <person name="Weiss S."/>
            <person name="Weissenbach J."/>
            <person name="Lett M.-C."/>
            <person name="Danchin A."/>
            <person name="Bertin P.N."/>
        </authorList>
    </citation>
    <scope>NUCLEOTIDE SEQUENCE [LARGE SCALE GENOMIC DNA]</scope>
    <source>
        <strain>ULPAs1</strain>
    </source>
</reference>
<comment type="cofactor">
    <cofactor evidence="1">
        <name>Zn(2+)</name>
        <dbReference type="ChEBI" id="CHEBI:29105"/>
    </cofactor>
    <text evidence="1">Binds 1 zinc ion per subunit.</text>
</comment>
<comment type="subcellular location">
    <subcellularLocation>
        <location evidence="1">Cell inner membrane</location>
        <topology evidence="1">Multi-pass membrane protein</topology>
    </subcellularLocation>
</comment>
<comment type="similarity">
    <text evidence="1">Belongs to the peptidase M48B family.</text>
</comment>